<evidence type="ECO:0000250" key="1">
    <source>
        <dbReference type="UniProtKB" id="Q4KLV1"/>
    </source>
</evidence>
<evidence type="ECO:0000250" key="2">
    <source>
        <dbReference type="UniProtKB" id="Q8WUD6"/>
    </source>
</evidence>
<evidence type="ECO:0000269" key="3">
    <source>
    </source>
</evidence>
<evidence type="ECO:0000303" key="4">
    <source>
    </source>
</evidence>
<evidence type="ECO:0000305" key="5"/>
<evidence type="ECO:0000312" key="6">
    <source>
        <dbReference type="MGI" id="MGI:2384841"/>
    </source>
</evidence>
<comment type="function">
    <text evidence="2">Catalyzes the final step of de novo phosphatidylcholine (PC) synthesis, i.e. the transfer of choline phosphate from CDP-choline to the free hydroxyl of a diacylglycerol (DAG), producing a PC. It thereby plays a central role in the formation and maintenance of vesicular membranes.</text>
</comment>
<comment type="catalytic activity">
    <reaction evidence="2">
        <text>CDP-choline + a 1,2-diacyl-sn-glycerol = a 1,2-diacyl-sn-glycero-3-phosphocholine + CMP + H(+)</text>
        <dbReference type="Rhea" id="RHEA:32939"/>
        <dbReference type="ChEBI" id="CHEBI:15378"/>
        <dbReference type="ChEBI" id="CHEBI:17815"/>
        <dbReference type="ChEBI" id="CHEBI:57643"/>
        <dbReference type="ChEBI" id="CHEBI:58779"/>
        <dbReference type="ChEBI" id="CHEBI:60377"/>
        <dbReference type="EC" id="2.7.8.2"/>
    </reaction>
    <physiologicalReaction direction="left-to-right" evidence="2">
        <dbReference type="Rhea" id="RHEA:32940"/>
    </physiologicalReaction>
</comment>
<comment type="catalytic activity">
    <reaction evidence="2">
        <text>1-octadecanoyl-2-(5Z,8Z,11Z,14Z-eicosatetraenoyl)-sn-glycerol + CDP-choline = 1-octadecanoyl-2-(5Z,8Z,11Z,14Z-eicosatetraenoyl)-sn-glycero-3-phosphocholine + CMP + H(+)</text>
        <dbReference type="Rhea" id="RHEA:54344"/>
        <dbReference type="ChEBI" id="CHEBI:15378"/>
        <dbReference type="ChEBI" id="CHEBI:58779"/>
        <dbReference type="ChEBI" id="CHEBI:60377"/>
        <dbReference type="ChEBI" id="CHEBI:74965"/>
        <dbReference type="ChEBI" id="CHEBI:75728"/>
    </reaction>
    <physiologicalReaction direction="left-to-right" evidence="2">
        <dbReference type="Rhea" id="RHEA:54345"/>
    </physiologicalReaction>
</comment>
<comment type="catalytic activity">
    <reaction evidence="2">
        <text>1-hexadecanoyl-2-(9Z-octadecenoyl)-sn-glycerol + CDP-choline = 1-hexadecanoyl-2-(9Z-octadecenoyl)-sn-glycero-3-phosphocholine + CMP + H(+)</text>
        <dbReference type="Rhea" id="RHEA:54244"/>
        <dbReference type="ChEBI" id="CHEBI:15378"/>
        <dbReference type="ChEBI" id="CHEBI:58779"/>
        <dbReference type="ChEBI" id="CHEBI:60377"/>
        <dbReference type="ChEBI" id="CHEBI:73001"/>
        <dbReference type="ChEBI" id="CHEBI:75466"/>
    </reaction>
    <physiologicalReaction direction="left-to-right" evidence="2">
        <dbReference type="Rhea" id="RHEA:54245"/>
    </physiologicalReaction>
</comment>
<comment type="catalytic activity">
    <reaction evidence="2">
        <text>1-hexadecanoyl-2-(4Z,7Z,10Z,13Z,16Z,19Z-docosahexaenoyl)-sn-glycerol + CDP-choline = 1-hexadecanoyl-2-(4Z,7Z,10Z,13Z,16Z,19Z-docosahexaenoyl)-sn-glycero-3-phosphocholine + CMP + H(+)</text>
        <dbReference type="Rhea" id="RHEA:54332"/>
        <dbReference type="ChEBI" id="CHEBI:15378"/>
        <dbReference type="ChEBI" id="CHEBI:58779"/>
        <dbReference type="ChEBI" id="CHEBI:60377"/>
        <dbReference type="ChEBI" id="CHEBI:74963"/>
        <dbReference type="ChEBI" id="CHEBI:82949"/>
    </reaction>
    <physiologicalReaction direction="left-to-right" evidence="2">
        <dbReference type="Rhea" id="RHEA:54333"/>
    </physiologicalReaction>
</comment>
<comment type="catalytic activity">
    <reaction evidence="1">
        <text>1,2-dioctanoyl-sn-glycerol + CDP-choline = 1,2-dioctanoyl-sn-glycero-3-phosphocholine + CMP + H(+)</text>
        <dbReference type="Rhea" id="RHEA:54232"/>
        <dbReference type="ChEBI" id="CHEBI:15378"/>
        <dbReference type="ChEBI" id="CHEBI:58779"/>
        <dbReference type="ChEBI" id="CHEBI:60377"/>
        <dbReference type="ChEBI" id="CHEBI:76979"/>
        <dbReference type="ChEBI" id="CHEBI:78228"/>
    </reaction>
    <physiologicalReaction direction="left-to-right" evidence="1">
        <dbReference type="Rhea" id="RHEA:54233"/>
    </physiologicalReaction>
</comment>
<comment type="cofactor">
    <cofactor evidence="2">
        <name>Mg(2+)</name>
        <dbReference type="ChEBI" id="CHEBI:18420"/>
    </cofactor>
    <cofactor evidence="2">
        <name>Mn(2+)</name>
        <dbReference type="ChEBI" id="CHEBI:29035"/>
    </cofactor>
</comment>
<comment type="pathway">
    <text evidence="2">Phospholipid metabolism; phosphatidylcholine biosynthesis; phosphatidylcholine from phosphocholine: step 2/2.</text>
</comment>
<comment type="subcellular location">
    <subcellularLocation>
        <location evidence="2">Golgi apparatus membrane</location>
        <topology evidence="2">Multi-pass membrane protein</topology>
    </subcellularLocation>
</comment>
<comment type="alternative products">
    <event type="alternative splicing"/>
    <isoform>
        <id>Q8C025-1</id>
        <name>1</name>
        <sequence type="displayed"/>
    </isoform>
    <isoform>
        <id>Q8C025-2</id>
        <name>2</name>
        <sequence type="described" ref="VSP_025991 VSP_025994"/>
    </isoform>
    <isoform>
        <id>Q8C025-3</id>
        <name>3</name>
        <sequence type="described" ref="VSP_025992 VSP_025993"/>
    </isoform>
</comment>
<comment type="tissue specificity">
    <text evidence="3">Expressed in brain, heart, lung, liver, spleen, intestine and muscle. Down-regulated in kidney of type 2 diabetic KK/Ta mice.</text>
</comment>
<comment type="similarity">
    <text evidence="5">Belongs to the CDP-alcohol phosphatidyltransferase class-I family.</text>
</comment>
<proteinExistence type="evidence at protein level"/>
<name>CHPT1_MOUSE</name>
<protein>
    <recommendedName>
        <fullName evidence="5">Cholinephosphotransferase 1</fullName>
        <shortName>mCHPT1</shortName>
        <ecNumber evidence="2">2.7.8.2</ecNumber>
    </recommendedName>
    <alternativeName>
        <fullName>Diabetic nephropathy-associated gene transcript 1</fullName>
    </alternativeName>
    <alternativeName>
        <fullName>Diacylglycerol cholinephosphotransferase 1</fullName>
    </alternativeName>
</protein>
<sequence length="398" mass="44608">MAAGAGARPAPRWVKALGEPLSAAQLRRLEEHRYTAVGESLFEPPLQLYWTWLLQWIPLWMAPNTITLIGLAINLVTTLVLIFYCPTVTEEAPYWTYLLCALGLFIYQSLDAIDGKQARRTNSCSPLGELFDHGCDSLSTVFMAIGASIAVRLGTHPDWLFFCSFVGMFMFYCAHWQTYVSGVLRFGRVDVTEIQVALVIVFMLSTFGGATMWDYTIPILEIKLKIVPVLGVVGGLIFSCSNYFHVILHGGVGKNGSTIAGTSVLSPGLHIGLIIILAIMIYKKSATNMFEKHPCLYTLMFGCVFAKVAQKLVIAHMTKSELYLQDTVFIGPGLLFLDQYFNNFIDEYVVLWIAMVISSFDMMIYFTSLCLQISRHLHLNIFKTSCQQAPEQVYKHID</sequence>
<accession>Q8C025</accession>
<accession>Q6SXV1</accession>
<accession>Q8K0H2</accession>
<accession>Q91W91</accession>
<dbReference type="EC" id="2.7.8.2" evidence="2"/>
<dbReference type="EMBL" id="AY445814">
    <property type="protein sequence ID" value="AAR16089.1"/>
    <property type="molecule type" value="mRNA"/>
</dbReference>
<dbReference type="EMBL" id="AK032497">
    <property type="protein sequence ID" value="BAC27897.1"/>
    <property type="molecule type" value="mRNA"/>
</dbReference>
<dbReference type="EMBL" id="BC016251">
    <property type="protein sequence ID" value="AAH16251.1"/>
    <property type="molecule type" value="mRNA"/>
</dbReference>
<dbReference type="EMBL" id="BC031435">
    <property type="protein sequence ID" value="AAH31435.1"/>
    <property type="molecule type" value="mRNA"/>
</dbReference>
<dbReference type="CCDS" id="CCDS24112.1">
    <molecule id="Q8C025-1"/>
</dbReference>
<dbReference type="PIR" id="S12207">
    <property type="entry name" value="S12207"/>
</dbReference>
<dbReference type="RefSeq" id="NP_659056.3">
    <molecule id="Q8C025-1"/>
    <property type="nucleotide sequence ID" value="NM_144807.3"/>
</dbReference>
<dbReference type="SMR" id="Q8C025"/>
<dbReference type="FunCoup" id="Q8C025">
    <property type="interactions" value="1706"/>
</dbReference>
<dbReference type="STRING" id="10090.ENSMUSP00000112708"/>
<dbReference type="GlyGen" id="Q8C025">
    <property type="glycosylation" value="1 site, 1 O-linked glycan (1 site)"/>
</dbReference>
<dbReference type="iPTMnet" id="Q8C025"/>
<dbReference type="PhosphoSitePlus" id="Q8C025"/>
<dbReference type="SwissPalm" id="Q8C025"/>
<dbReference type="jPOST" id="Q8C025"/>
<dbReference type="PaxDb" id="10090-ENSMUSP00000112708"/>
<dbReference type="ProteomicsDB" id="283910">
    <molecule id="Q8C025-1"/>
</dbReference>
<dbReference type="ProteomicsDB" id="283911">
    <molecule id="Q8C025-2"/>
</dbReference>
<dbReference type="ProteomicsDB" id="283912">
    <molecule id="Q8C025-3"/>
</dbReference>
<dbReference type="Pumba" id="Q8C025"/>
<dbReference type="Antibodypedia" id="55006">
    <property type="antibodies" value="93 antibodies from 20 providers"/>
</dbReference>
<dbReference type="DNASU" id="212862"/>
<dbReference type="Ensembl" id="ENSMUST00000020253.15">
    <molecule id="Q8C025-1"/>
    <property type="protein sequence ID" value="ENSMUSP00000020253.9"/>
    <property type="gene ID" value="ENSMUSG00000060002.15"/>
</dbReference>
<dbReference type="Ensembl" id="ENSMUST00000073783.6">
    <molecule id="Q8C025-2"/>
    <property type="protein sequence ID" value="ENSMUSP00000073455.6"/>
    <property type="gene ID" value="ENSMUSG00000060002.15"/>
</dbReference>
<dbReference type="Ensembl" id="ENSMUST00000139109.8">
    <molecule id="Q8C025-1"/>
    <property type="protein sequence ID" value="ENSMUSP00000116413.2"/>
    <property type="gene ID" value="ENSMUSG00000060002.15"/>
</dbReference>
<dbReference type="GeneID" id="212862"/>
<dbReference type="KEGG" id="mmu:212862"/>
<dbReference type="UCSC" id="uc007grr.2">
    <molecule id="Q8C025-1"/>
    <property type="organism name" value="mouse"/>
</dbReference>
<dbReference type="UCSC" id="uc007grs.2">
    <molecule id="Q8C025-2"/>
    <property type="organism name" value="mouse"/>
</dbReference>
<dbReference type="AGR" id="MGI:2384841"/>
<dbReference type="CTD" id="56994"/>
<dbReference type="MGI" id="MGI:2384841">
    <property type="gene designation" value="Chpt1"/>
</dbReference>
<dbReference type="VEuPathDB" id="HostDB:ENSMUSG00000060002"/>
<dbReference type="eggNOG" id="KOG2877">
    <property type="taxonomic scope" value="Eukaryota"/>
</dbReference>
<dbReference type="GeneTree" id="ENSGT00950000183117"/>
<dbReference type="InParanoid" id="Q8C025"/>
<dbReference type="OMA" id="FITRQIC"/>
<dbReference type="OrthoDB" id="196717at2759"/>
<dbReference type="PhylomeDB" id="Q8C025"/>
<dbReference type="Reactome" id="R-MMU-1483191">
    <property type="pathway name" value="Synthesis of PC"/>
</dbReference>
<dbReference type="UniPathway" id="UPA00753">
    <property type="reaction ID" value="UER00740"/>
</dbReference>
<dbReference type="BioGRID-ORCS" id="212862">
    <property type="hits" value="1 hit in 79 CRISPR screens"/>
</dbReference>
<dbReference type="ChiTaRS" id="Chpt1">
    <property type="organism name" value="mouse"/>
</dbReference>
<dbReference type="PRO" id="PR:Q8C025"/>
<dbReference type="Proteomes" id="UP000000589">
    <property type="component" value="Chromosome 10"/>
</dbReference>
<dbReference type="RNAct" id="Q8C025">
    <property type="molecule type" value="protein"/>
</dbReference>
<dbReference type="Bgee" id="ENSMUSG00000060002">
    <property type="expression patterns" value="Expressed in right kidney and 256 other cell types or tissues"/>
</dbReference>
<dbReference type="ExpressionAtlas" id="Q8C025">
    <property type="expression patterns" value="baseline and differential"/>
</dbReference>
<dbReference type="GO" id="GO:0005794">
    <property type="term" value="C:Golgi apparatus"/>
    <property type="evidence" value="ECO:0000314"/>
    <property type="project" value="MGI"/>
</dbReference>
<dbReference type="GO" id="GO:0000139">
    <property type="term" value="C:Golgi membrane"/>
    <property type="evidence" value="ECO:0007669"/>
    <property type="project" value="UniProtKB-SubCell"/>
</dbReference>
<dbReference type="GO" id="GO:0004142">
    <property type="term" value="F:diacylglycerol cholinephosphotransferase activity"/>
    <property type="evidence" value="ECO:0000250"/>
    <property type="project" value="UniProtKB"/>
</dbReference>
<dbReference type="GO" id="GO:0046872">
    <property type="term" value="F:metal ion binding"/>
    <property type="evidence" value="ECO:0007669"/>
    <property type="project" value="UniProtKB-KW"/>
</dbReference>
<dbReference type="GO" id="GO:0016780">
    <property type="term" value="F:phosphotransferase activity, for other substituted phosphate groups"/>
    <property type="evidence" value="ECO:0000314"/>
    <property type="project" value="MGI"/>
</dbReference>
<dbReference type="GO" id="GO:0006656">
    <property type="term" value="P:phosphatidylcholine biosynthetic process"/>
    <property type="evidence" value="ECO:0000314"/>
    <property type="project" value="MGI"/>
</dbReference>
<dbReference type="GO" id="GO:0006663">
    <property type="term" value="P:platelet activating factor biosynthetic process"/>
    <property type="evidence" value="ECO:0000250"/>
    <property type="project" value="UniProtKB"/>
</dbReference>
<dbReference type="FunFam" id="1.20.120.1760:FF:000002">
    <property type="entry name" value="Choline/ethanolamine phosphotransferase 1"/>
    <property type="match status" value="1"/>
</dbReference>
<dbReference type="Gene3D" id="1.20.120.1760">
    <property type="match status" value="1"/>
</dbReference>
<dbReference type="InterPro" id="IPR000462">
    <property type="entry name" value="CDP-OH_P_trans"/>
</dbReference>
<dbReference type="InterPro" id="IPR043130">
    <property type="entry name" value="CDP-OH_PTrfase_TM_dom"/>
</dbReference>
<dbReference type="InterPro" id="IPR048254">
    <property type="entry name" value="CDP_ALCOHOL_P_TRANSF_CS"/>
</dbReference>
<dbReference type="InterPro" id="IPR014472">
    <property type="entry name" value="CHOPT"/>
</dbReference>
<dbReference type="PANTHER" id="PTHR10414:SF32">
    <property type="entry name" value="CHOLINEPHOSPHOTRANSFERASE 1"/>
    <property type="match status" value="1"/>
</dbReference>
<dbReference type="PANTHER" id="PTHR10414">
    <property type="entry name" value="ETHANOLAMINEPHOSPHOTRANSFERASE"/>
    <property type="match status" value="1"/>
</dbReference>
<dbReference type="Pfam" id="PF01066">
    <property type="entry name" value="CDP-OH_P_transf"/>
    <property type="match status" value="1"/>
</dbReference>
<dbReference type="PIRSF" id="PIRSF015665">
    <property type="entry name" value="CHOPT"/>
    <property type="match status" value="1"/>
</dbReference>
<dbReference type="PROSITE" id="PS00379">
    <property type="entry name" value="CDP_ALCOHOL_P_TRANSF"/>
    <property type="match status" value="1"/>
</dbReference>
<reference key="1">
    <citation type="journal article" date="2004" name="Metabolism">
        <title>Altered mouse cholinephosphotransferase gene expression in kidneys of type 2 diabetic KK/TA mouse.</title>
        <authorList>
            <person name="Gohda T."/>
            <person name="Tanimoto M."/>
            <person name="Shiina K."/>
            <person name="Ito T."/>
            <person name="Kobayashi M."/>
            <person name="Hagiwara S."/>
            <person name="Kaneko S."/>
            <person name="Makita Y."/>
            <person name="Funabiki K."/>
            <person name="Horikoshi S."/>
            <person name="Tomino Y."/>
        </authorList>
    </citation>
    <scope>NUCLEOTIDE SEQUENCE [MRNA] (ISOFORM 1)</scope>
    <scope>TISSUE SPECIFICITY</scope>
    <source>
        <strain>KK Obese</strain>
    </source>
</reference>
<reference key="2">
    <citation type="journal article" date="2005" name="Science">
        <title>The transcriptional landscape of the mammalian genome.</title>
        <authorList>
            <person name="Carninci P."/>
            <person name="Kasukawa T."/>
            <person name="Katayama S."/>
            <person name="Gough J."/>
            <person name="Frith M.C."/>
            <person name="Maeda N."/>
            <person name="Oyama R."/>
            <person name="Ravasi T."/>
            <person name="Lenhard B."/>
            <person name="Wells C."/>
            <person name="Kodzius R."/>
            <person name="Shimokawa K."/>
            <person name="Bajic V.B."/>
            <person name="Brenner S.E."/>
            <person name="Batalov S."/>
            <person name="Forrest A.R."/>
            <person name="Zavolan M."/>
            <person name="Davis M.J."/>
            <person name="Wilming L.G."/>
            <person name="Aidinis V."/>
            <person name="Allen J.E."/>
            <person name="Ambesi-Impiombato A."/>
            <person name="Apweiler R."/>
            <person name="Aturaliya R.N."/>
            <person name="Bailey T.L."/>
            <person name="Bansal M."/>
            <person name="Baxter L."/>
            <person name="Beisel K.W."/>
            <person name="Bersano T."/>
            <person name="Bono H."/>
            <person name="Chalk A.M."/>
            <person name="Chiu K.P."/>
            <person name="Choudhary V."/>
            <person name="Christoffels A."/>
            <person name="Clutterbuck D.R."/>
            <person name="Crowe M.L."/>
            <person name="Dalla E."/>
            <person name="Dalrymple B.P."/>
            <person name="de Bono B."/>
            <person name="Della Gatta G."/>
            <person name="di Bernardo D."/>
            <person name="Down T."/>
            <person name="Engstrom P."/>
            <person name="Fagiolini M."/>
            <person name="Faulkner G."/>
            <person name="Fletcher C.F."/>
            <person name="Fukushima T."/>
            <person name="Furuno M."/>
            <person name="Futaki S."/>
            <person name="Gariboldi M."/>
            <person name="Georgii-Hemming P."/>
            <person name="Gingeras T.R."/>
            <person name="Gojobori T."/>
            <person name="Green R.E."/>
            <person name="Gustincich S."/>
            <person name="Harbers M."/>
            <person name="Hayashi Y."/>
            <person name="Hensch T.K."/>
            <person name="Hirokawa N."/>
            <person name="Hill D."/>
            <person name="Huminiecki L."/>
            <person name="Iacono M."/>
            <person name="Ikeo K."/>
            <person name="Iwama A."/>
            <person name="Ishikawa T."/>
            <person name="Jakt M."/>
            <person name="Kanapin A."/>
            <person name="Katoh M."/>
            <person name="Kawasawa Y."/>
            <person name="Kelso J."/>
            <person name="Kitamura H."/>
            <person name="Kitano H."/>
            <person name="Kollias G."/>
            <person name="Krishnan S.P."/>
            <person name="Kruger A."/>
            <person name="Kummerfeld S.K."/>
            <person name="Kurochkin I.V."/>
            <person name="Lareau L.F."/>
            <person name="Lazarevic D."/>
            <person name="Lipovich L."/>
            <person name="Liu J."/>
            <person name="Liuni S."/>
            <person name="McWilliam S."/>
            <person name="Madan Babu M."/>
            <person name="Madera M."/>
            <person name="Marchionni L."/>
            <person name="Matsuda H."/>
            <person name="Matsuzawa S."/>
            <person name="Miki H."/>
            <person name="Mignone F."/>
            <person name="Miyake S."/>
            <person name="Morris K."/>
            <person name="Mottagui-Tabar S."/>
            <person name="Mulder N."/>
            <person name="Nakano N."/>
            <person name="Nakauchi H."/>
            <person name="Ng P."/>
            <person name="Nilsson R."/>
            <person name="Nishiguchi S."/>
            <person name="Nishikawa S."/>
            <person name="Nori F."/>
            <person name="Ohara O."/>
            <person name="Okazaki Y."/>
            <person name="Orlando V."/>
            <person name="Pang K.C."/>
            <person name="Pavan W.J."/>
            <person name="Pavesi G."/>
            <person name="Pesole G."/>
            <person name="Petrovsky N."/>
            <person name="Piazza S."/>
            <person name="Reed J."/>
            <person name="Reid J.F."/>
            <person name="Ring B.Z."/>
            <person name="Ringwald M."/>
            <person name="Rost B."/>
            <person name="Ruan Y."/>
            <person name="Salzberg S.L."/>
            <person name="Sandelin A."/>
            <person name="Schneider C."/>
            <person name="Schoenbach C."/>
            <person name="Sekiguchi K."/>
            <person name="Semple C.A."/>
            <person name="Seno S."/>
            <person name="Sessa L."/>
            <person name="Sheng Y."/>
            <person name="Shibata Y."/>
            <person name="Shimada H."/>
            <person name="Shimada K."/>
            <person name="Silva D."/>
            <person name="Sinclair B."/>
            <person name="Sperling S."/>
            <person name="Stupka E."/>
            <person name="Sugiura K."/>
            <person name="Sultana R."/>
            <person name="Takenaka Y."/>
            <person name="Taki K."/>
            <person name="Tammoja K."/>
            <person name="Tan S.L."/>
            <person name="Tang S."/>
            <person name="Taylor M.S."/>
            <person name="Tegner J."/>
            <person name="Teichmann S.A."/>
            <person name="Ueda H.R."/>
            <person name="van Nimwegen E."/>
            <person name="Verardo R."/>
            <person name="Wei C.L."/>
            <person name="Yagi K."/>
            <person name="Yamanishi H."/>
            <person name="Zabarovsky E."/>
            <person name="Zhu S."/>
            <person name="Zimmer A."/>
            <person name="Hide W."/>
            <person name="Bult C."/>
            <person name="Grimmond S.M."/>
            <person name="Teasdale R.D."/>
            <person name="Liu E.T."/>
            <person name="Brusic V."/>
            <person name="Quackenbush J."/>
            <person name="Wahlestedt C."/>
            <person name="Mattick J.S."/>
            <person name="Hume D.A."/>
            <person name="Kai C."/>
            <person name="Sasaki D."/>
            <person name="Tomaru Y."/>
            <person name="Fukuda S."/>
            <person name="Kanamori-Katayama M."/>
            <person name="Suzuki M."/>
            <person name="Aoki J."/>
            <person name="Arakawa T."/>
            <person name="Iida J."/>
            <person name="Imamura K."/>
            <person name="Itoh M."/>
            <person name="Kato T."/>
            <person name="Kawaji H."/>
            <person name="Kawagashira N."/>
            <person name="Kawashima T."/>
            <person name="Kojima M."/>
            <person name="Kondo S."/>
            <person name="Konno H."/>
            <person name="Nakano K."/>
            <person name="Ninomiya N."/>
            <person name="Nishio T."/>
            <person name="Okada M."/>
            <person name="Plessy C."/>
            <person name="Shibata K."/>
            <person name="Shiraki T."/>
            <person name="Suzuki S."/>
            <person name="Tagami M."/>
            <person name="Waki K."/>
            <person name="Watahiki A."/>
            <person name="Okamura-Oho Y."/>
            <person name="Suzuki H."/>
            <person name="Kawai J."/>
            <person name="Hayashizaki Y."/>
        </authorList>
    </citation>
    <scope>NUCLEOTIDE SEQUENCE [LARGE SCALE MRNA] (ISOFORM 1)</scope>
    <source>
        <strain>C57BL/6J</strain>
        <tissue>Olfactory bulb</tissue>
    </source>
</reference>
<reference key="3">
    <citation type="journal article" date="2004" name="Genome Res.">
        <title>The status, quality, and expansion of the NIH full-length cDNA project: the Mammalian Gene Collection (MGC).</title>
        <authorList>
            <consortium name="The MGC Project Team"/>
        </authorList>
    </citation>
    <scope>NUCLEOTIDE SEQUENCE [LARGE SCALE MRNA] (ISOFORMS 2 AND 3)</scope>
    <source>
        <strain>FVB/N</strain>
        <tissue>Kidney</tissue>
        <tissue>Salivary gland</tissue>
    </source>
</reference>
<reference key="4">
    <citation type="journal article" date="2010" name="Cell">
        <title>A tissue-specific atlas of mouse protein phosphorylation and expression.</title>
        <authorList>
            <person name="Huttlin E.L."/>
            <person name="Jedrychowski M.P."/>
            <person name="Elias J.E."/>
            <person name="Goswami T."/>
            <person name="Rad R."/>
            <person name="Beausoleil S.A."/>
            <person name="Villen J."/>
            <person name="Haas W."/>
            <person name="Sowa M.E."/>
            <person name="Gygi S.P."/>
        </authorList>
    </citation>
    <scope>IDENTIFICATION BY MASS SPECTROMETRY [LARGE SCALE ANALYSIS]</scope>
    <source>
        <tissue>Brown adipose tissue</tissue>
        <tissue>Kidney</tissue>
        <tissue>Lung</tissue>
    </source>
</reference>
<organism>
    <name type="scientific">Mus musculus</name>
    <name type="common">Mouse</name>
    <dbReference type="NCBI Taxonomy" id="10090"/>
    <lineage>
        <taxon>Eukaryota</taxon>
        <taxon>Metazoa</taxon>
        <taxon>Chordata</taxon>
        <taxon>Craniata</taxon>
        <taxon>Vertebrata</taxon>
        <taxon>Euteleostomi</taxon>
        <taxon>Mammalia</taxon>
        <taxon>Eutheria</taxon>
        <taxon>Euarchontoglires</taxon>
        <taxon>Glires</taxon>
        <taxon>Rodentia</taxon>
        <taxon>Myomorpha</taxon>
        <taxon>Muroidea</taxon>
        <taxon>Muridae</taxon>
        <taxon>Murinae</taxon>
        <taxon>Mus</taxon>
        <taxon>Mus</taxon>
    </lineage>
</organism>
<keyword id="KW-0007">Acetylation</keyword>
<keyword id="KW-0025">Alternative splicing</keyword>
<keyword id="KW-0333">Golgi apparatus</keyword>
<keyword id="KW-0444">Lipid biosynthesis</keyword>
<keyword id="KW-0443">Lipid metabolism</keyword>
<keyword id="KW-0460">Magnesium</keyword>
<keyword id="KW-0464">Manganese</keyword>
<keyword id="KW-0472">Membrane</keyword>
<keyword id="KW-0479">Metal-binding</keyword>
<keyword id="KW-0594">Phospholipid biosynthesis</keyword>
<keyword id="KW-1208">Phospholipid metabolism</keyword>
<keyword id="KW-1185">Reference proteome</keyword>
<keyword id="KW-0808">Transferase</keyword>
<keyword id="KW-0812">Transmembrane</keyword>
<keyword id="KW-1133">Transmembrane helix</keyword>
<gene>
    <name evidence="6" type="primary">Chpt1</name>
    <name type="synonym">Cpt1</name>
    <name type="synonym">Dn4</name>
</gene>
<feature type="initiator methionine" description="Removed" evidence="2">
    <location>
        <position position="1"/>
    </location>
</feature>
<feature type="chain" id="PRO_0000289253" description="Cholinephosphotransferase 1">
    <location>
        <begin position="2"/>
        <end position="398"/>
    </location>
</feature>
<feature type="topological domain" description="Cytoplasmic" evidence="5">
    <location>
        <begin position="2"/>
        <end position="62"/>
    </location>
</feature>
<feature type="transmembrane region" description="Helical; Name=1" evidence="1">
    <location>
        <begin position="63"/>
        <end position="83"/>
    </location>
</feature>
<feature type="topological domain" description="Lumenal" evidence="5">
    <location>
        <begin position="84"/>
        <end position="93"/>
    </location>
</feature>
<feature type="transmembrane region" description="Helical; Name=2" evidence="1">
    <location>
        <begin position="94"/>
        <end position="118"/>
    </location>
</feature>
<feature type="topological domain" description="Cytoplasmic" evidence="5">
    <location>
        <begin position="119"/>
        <end position="125"/>
    </location>
</feature>
<feature type="transmembrane region" description="Helical; Name=3" evidence="1">
    <location>
        <begin position="126"/>
        <end position="150"/>
    </location>
</feature>
<feature type="topological domain" description="Lumenal" evidence="5">
    <location>
        <begin position="151"/>
        <end position="160"/>
    </location>
</feature>
<feature type="transmembrane region" description="Helical; Name=4" evidence="1">
    <location>
        <begin position="161"/>
        <end position="179"/>
    </location>
</feature>
<feature type="topological domain" description="Cytoplasmic" evidence="5">
    <location>
        <begin position="180"/>
        <end position="190"/>
    </location>
</feature>
<feature type="transmembrane region" description="Helical; Name=5" evidence="1">
    <location>
        <begin position="191"/>
        <end position="207"/>
    </location>
</feature>
<feature type="topological domain" description="Lumenal" evidence="5">
    <location>
        <begin position="208"/>
        <end position="222"/>
    </location>
</feature>
<feature type="transmembrane region" description="Helical; Name=6" evidence="1">
    <location>
        <begin position="223"/>
        <end position="248"/>
    </location>
</feature>
<feature type="topological domain" description="Cytoplasmic" evidence="5">
    <location>
        <begin position="249"/>
        <end position="265"/>
    </location>
</feature>
<feature type="transmembrane region" description="Helical; Name=7" evidence="1">
    <location>
        <begin position="266"/>
        <end position="281"/>
    </location>
</feature>
<feature type="topological domain" description="Lumenal" evidence="5">
    <location>
        <begin position="282"/>
        <end position="293"/>
    </location>
</feature>
<feature type="transmembrane region" description="Helical; Name=8" evidence="1">
    <location>
        <begin position="294"/>
        <end position="316"/>
    </location>
</feature>
<feature type="topological domain" description="Cytoplasmic" evidence="5">
    <location>
        <begin position="317"/>
        <end position="329"/>
    </location>
</feature>
<feature type="transmembrane region" description="Helical; Name=9" evidence="1">
    <location>
        <begin position="330"/>
        <end position="339"/>
    </location>
</feature>
<feature type="topological domain" description="Lumenal" evidence="5">
    <location>
        <begin position="340"/>
        <end position="346"/>
    </location>
</feature>
<feature type="transmembrane region" description="Helical; Name=10" evidence="1">
    <location>
        <begin position="347"/>
        <end position="376"/>
    </location>
</feature>
<feature type="topological domain" description="Cytoplasmic" evidence="5">
    <location>
        <begin position="377"/>
        <end position="398"/>
    </location>
</feature>
<feature type="active site" description="Proton acceptor" evidence="1">
    <location>
        <position position="133"/>
    </location>
</feature>
<feature type="binding site" evidence="1">
    <location>
        <position position="64"/>
    </location>
    <ligand>
        <name>CDP-choline</name>
        <dbReference type="ChEBI" id="CHEBI:58779"/>
    </ligand>
</feature>
<feature type="binding site" evidence="1">
    <location>
        <position position="111"/>
    </location>
    <ligand>
        <name>Mg(2+)</name>
        <dbReference type="ChEBI" id="CHEBI:18420"/>
        <label>1</label>
    </ligand>
</feature>
<feature type="binding site" evidence="1">
    <location>
        <position position="111"/>
    </location>
    <ligand>
        <name>Mg(2+)</name>
        <dbReference type="ChEBI" id="CHEBI:18420"/>
        <label>2</label>
    </ligand>
</feature>
<feature type="binding site" evidence="1">
    <location>
        <position position="114"/>
    </location>
    <ligand>
        <name>Mg(2+)</name>
        <dbReference type="ChEBI" id="CHEBI:18420"/>
        <label>1</label>
    </ligand>
</feature>
<feature type="binding site" evidence="1">
    <location>
        <position position="119"/>
    </location>
    <ligand>
        <name>CDP-choline</name>
        <dbReference type="ChEBI" id="CHEBI:58779"/>
    </ligand>
</feature>
<feature type="binding site" evidence="1">
    <location>
        <position position="132"/>
    </location>
    <ligand>
        <name>Mg(2+)</name>
        <dbReference type="ChEBI" id="CHEBI:18420"/>
        <label>1</label>
    </ligand>
</feature>
<feature type="binding site" evidence="1">
    <location>
        <position position="132"/>
    </location>
    <ligand>
        <name>Mg(2+)</name>
        <dbReference type="ChEBI" id="CHEBI:18420"/>
        <label>2</label>
    </ligand>
</feature>
<feature type="binding site" evidence="1">
    <location>
        <position position="136"/>
    </location>
    <ligand>
        <name>Mg(2+)</name>
        <dbReference type="ChEBI" id="CHEBI:18420"/>
        <label>2</label>
    </ligand>
</feature>
<feature type="site" description="Increases basicity of active site His" evidence="1">
    <location>
        <position position="129"/>
    </location>
</feature>
<feature type="modified residue" description="N-acetylalanine" evidence="2">
    <location>
        <position position="2"/>
    </location>
</feature>
<feature type="splice variant" id="VSP_025991" description="In isoform 2." evidence="4">
    <original>RVDVTEIQVALVIVFMLSTFGGATMWDYTIPILEIKLKIVPVLGVVGGLI</original>
    <variation>SQEVFFRAGEMAQWVRAPDCSSEGPEFKSQQPHGGSQPSVTRSDALFWSV</variation>
    <location>
        <begin position="188"/>
        <end position="237"/>
    </location>
</feature>
<feature type="splice variant" id="VSP_025992" description="In isoform 3." evidence="4">
    <original>RVDVTEIQVALVIVFMLSTFGGATMWDYTIPILEIKLKIVPV</original>
    <variation>RWRTLSSLSSTMPAACHHASCHNDHGLNLGTLNQLQWNVFFL</variation>
    <location>
        <begin position="188"/>
        <end position="229"/>
    </location>
</feature>
<feature type="splice variant" id="VSP_025993" description="In isoform 3." evidence="4">
    <location>
        <begin position="230"/>
        <end position="398"/>
    </location>
</feature>
<feature type="splice variant" id="VSP_025994" description="In isoform 2." evidence="4">
    <location>
        <begin position="238"/>
        <end position="398"/>
    </location>
</feature>
<feature type="sequence conflict" description="In Ref. 3; AAH16251." evidence="5" ref="3">
    <original>R</original>
    <variation>W</variation>
    <location>
        <position position="28"/>
    </location>
</feature>
<feature type="sequence conflict" description="In Ref. 1; AAR16089." evidence="5" ref="1">
    <original>W</original>
    <variation>G</variation>
    <location>
        <position position="159"/>
    </location>
</feature>
<feature type="sequence conflict" description="In Ref. 1; AAR16089." evidence="5" ref="1">
    <original>M</original>
    <variation>L</variation>
    <location>
        <position position="362"/>
    </location>
</feature>